<sequence>MTDNNEFDVADLRREYIRGGLRRSDLTENPLELFERWLKQACDARLPDPTAMCVATVDANGQPYQRIVLLKHYDDQGLVFYTNLGSRKAQQLAQNPHISLLFPWHMLDRQVIFLGTTERLSTLEVLKYFSSRPKDSQIGAWVSQQSSRISARGVLESKFLELKQKFQQGEVPLPSFWGGFRVKFDSVEFWQGGEHRLHDRFIYQRNADTWKIDRLAP</sequence>
<keyword id="KW-0285">Flavoprotein</keyword>
<keyword id="KW-0288">FMN</keyword>
<keyword id="KW-0560">Oxidoreductase</keyword>
<keyword id="KW-0664">Pyridoxine biosynthesis</keyword>
<accession>A1JNV9</accession>
<dbReference type="EC" id="1.4.3.5" evidence="1"/>
<dbReference type="EMBL" id="AM286415">
    <property type="protein sequence ID" value="CAL12210.1"/>
    <property type="molecule type" value="Genomic_DNA"/>
</dbReference>
<dbReference type="RefSeq" id="WP_005169486.1">
    <property type="nucleotide sequence ID" value="NC_008800.1"/>
</dbReference>
<dbReference type="RefSeq" id="YP_001006380.1">
    <property type="nucleotide sequence ID" value="NC_008800.1"/>
</dbReference>
<dbReference type="SMR" id="A1JNV9"/>
<dbReference type="KEGG" id="yen:YE2140"/>
<dbReference type="PATRIC" id="fig|393305.7.peg.2303"/>
<dbReference type="eggNOG" id="COG0259">
    <property type="taxonomic scope" value="Bacteria"/>
</dbReference>
<dbReference type="HOGENOM" id="CLU_032263_2_2_6"/>
<dbReference type="OrthoDB" id="9780392at2"/>
<dbReference type="UniPathway" id="UPA01068">
    <property type="reaction ID" value="UER00304"/>
</dbReference>
<dbReference type="UniPathway" id="UPA01068">
    <property type="reaction ID" value="UER00305"/>
</dbReference>
<dbReference type="Proteomes" id="UP000000642">
    <property type="component" value="Chromosome"/>
</dbReference>
<dbReference type="GO" id="GO:0010181">
    <property type="term" value="F:FMN binding"/>
    <property type="evidence" value="ECO:0007669"/>
    <property type="project" value="UniProtKB-UniRule"/>
</dbReference>
<dbReference type="GO" id="GO:0004733">
    <property type="term" value="F:pyridoxamine phosphate oxidase activity"/>
    <property type="evidence" value="ECO:0007669"/>
    <property type="project" value="UniProtKB-UniRule"/>
</dbReference>
<dbReference type="GO" id="GO:0008615">
    <property type="term" value="P:pyridoxine biosynthetic process"/>
    <property type="evidence" value="ECO:0007669"/>
    <property type="project" value="UniProtKB-KW"/>
</dbReference>
<dbReference type="FunFam" id="2.30.110.10:FF:000001">
    <property type="entry name" value="Pyridoxine/pyridoxamine 5'-phosphate oxidase"/>
    <property type="match status" value="1"/>
</dbReference>
<dbReference type="Gene3D" id="2.30.110.10">
    <property type="entry name" value="Electron Transport, Fmn-binding Protein, Chain A"/>
    <property type="match status" value="1"/>
</dbReference>
<dbReference type="HAMAP" id="MF_01629">
    <property type="entry name" value="PdxH"/>
    <property type="match status" value="1"/>
</dbReference>
<dbReference type="InterPro" id="IPR000659">
    <property type="entry name" value="Pyridox_Oxase"/>
</dbReference>
<dbReference type="InterPro" id="IPR019740">
    <property type="entry name" value="Pyridox_Oxase_CS"/>
</dbReference>
<dbReference type="InterPro" id="IPR011576">
    <property type="entry name" value="Pyridox_Oxase_N"/>
</dbReference>
<dbReference type="InterPro" id="IPR019576">
    <property type="entry name" value="Pyridoxamine_oxidase_dimer_C"/>
</dbReference>
<dbReference type="InterPro" id="IPR012349">
    <property type="entry name" value="Split_barrel_FMN-bd"/>
</dbReference>
<dbReference type="NCBIfam" id="TIGR00558">
    <property type="entry name" value="pdxH"/>
    <property type="match status" value="1"/>
</dbReference>
<dbReference type="NCBIfam" id="NF004231">
    <property type="entry name" value="PRK05679.1"/>
    <property type="match status" value="1"/>
</dbReference>
<dbReference type="PANTHER" id="PTHR10851:SF0">
    <property type="entry name" value="PYRIDOXINE-5'-PHOSPHATE OXIDASE"/>
    <property type="match status" value="1"/>
</dbReference>
<dbReference type="PANTHER" id="PTHR10851">
    <property type="entry name" value="PYRIDOXINE-5-PHOSPHATE OXIDASE"/>
    <property type="match status" value="1"/>
</dbReference>
<dbReference type="Pfam" id="PF10590">
    <property type="entry name" value="PNP_phzG_C"/>
    <property type="match status" value="1"/>
</dbReference>
<dbReference type="Pfam" id="PF01243">
    <property type="entry name" value="PNPOx_N"/>
    <property type="match status" value="1"/>
</dbReference>
<dbReference type="PIRSF" id="PIRSF000190">
    <property type="entry name" value="Pyd_amn-ph_oxd"/>
    <property type="match status" value="1"/>
</dbReference>
<dbReference type="SUPFAM" id="SSF50475">
    <property type="entry name" value="FMN-binding split barrel"/>
    <property type="match status" value="1"/>
</dbReference>
<dbReference type="PROSITE" id="PS01064">
    <property type="entry name" value="PYRIDOX_OXIDASE"/>
    <property type="match status" value="1"/>
</dbReference>
<name>PDXH_YERE8</name>
<comment type="function">
    <text evidence="1">Catalyzes the oxidation of either pyridoxine 5'-phosphate (PNP) or pyridoxamine 5'-phosphate (PMP) into pyridoxal 5'-phosphate (PLP).</text>
</comment>
<comment type="catalytic activity">
    <reaction evidence="1">
        <text>pyridoxamine 5'-phosphate + O2 + H2O = pyridoxal 5'-phosphate + H2O2 + NH4(+)</text>
        <dbReference type="Rhea" id="RHEA:15817"/>
        <dbReference type="ChEBI" id="CHEBI:15377"/>
        <dbReference type="ChEBI" id="CHEBI:15379"/>
        <dbReference type="ChEBI" id="CHEBI:16240"/>
        <dbReference type="ChEBI" id="CHEBI:28938"/>
        <dbReference type="ChEBI" id="CHEBI:58451"/>
        <dbReference type="ChEBI" id="CHEBI:597326"/>
        <dbReference type="EC" id="1.4.3.5"/>
    </reaction>
</comment>
<comment type="catalytic activity">
    <reaction evidence="1">
        <text>pyridoxine 5'-phosphate + O2 = pyridoxal 5'-phosphate + H2O2</text>
        <dbReference type="Rhea" id="RHEA:15149"/>
        <dbReference type="ChEBI" id="CHEBI:15379"/>
        <dbReference type="ChEBI" id="CHEBI:16240"/>
        <dbReference type="ChEBI" id="CHEBI:58589"/>
        <dbReference type="ChEBI" id="CHEBI:597326"/>
        <dbReference type="EC" id="1.4.3.5"/>
    </reaction>
</comment>
<comment type="cofactor">
    <cofactor evidence="1">
        <name>FMN</name>
        <dbReference type="ChEBI" id="CHEBI:58210"/>
    </cofactor>
    <text evidence="1">Binds 1 FMN per subunit.</text>
</comment>
<comment type="pathway">
    <text evidence="1">Cofactor metabolism; pyridoxal 5'-phosphate salvage; pyridoxal 5'-phosphate from pyridoxamine 5'-phosphate: step 1/1.</text>
</comment>
<comment type="pathway">
    <text evidence="1">Cofactor metabolism; pyridoxal 5'-phosphate salvage; pyridoxal 5'-phosphate from pyridoxine 5'-phosphate: step 1/1.</text>
</comment>
<comment type="subunit">
    <text evidence="1">Homodimer.</text>
</comment>
<comment type="similarity">
    <text evidence="1">Belongs to the pyridoxamine 5'-phosphate oxidase family.</text>
</comment>
<gene>
    <name evidence="1" type="primary">pdxH</name>
    <name type="ordered locus">YE2140</name>
</gene>
<evidence type="ECO:0000255" key="1">
    <source>
        <dbReference type="HAMAP-Rule" id="MF_01629"/>
    </source>
</evidence>
<organism>
    <name type="scientific">Yersinia enterocolitica serotype O:8 / biotype 1B (strain NCTC 13174 / 8081)</name>
    <dbReference type="NCBI Taxonomy" id="393305"/>
    <lineage>
        <taxon>Bacteria</taxon>
        <taxon>Pseudomonadati</taxon>
        <taxon>Pseudomonadota</taxon>
        <taxon>Gammaproteobacteria</taxon>
        <taxon>Enterobacterales</taxon>
        <taxon>Yersiniaceae</taxon>
        <taxon>Yersinia</taxon>
    </lineage>
</organism>
<feature type="chain" id="PRO_0000292335" description="Pyridoxine/pyridoxamine 5'-phosphate oxidase">
    <location>
        <begin position="1"/>
        <end position="217"/>
    </location>
</feature>
<feature type="binding site" evidence="1">
    <location>
        <begin position="13"/>
        <end position="16"/>
    </location>
    <ligand>
        <name>substrate</name>
    </ligand>
</feature>
<feature type="binding site" evidence="1">
    <location>
        <begin position="66"/>
        <end position="71"/>
    </location>
    <ligand>
        <name>FMN</name>
        <dbReference type="ChEBI" id="CHEBI:58210"/>
    </ligand>
</feature>
<feature type="binding site" evidence="1">
    <location>
        <position position="71"/>
    </location>
    <ligand>
        <name>substrate</name>
    </ligand>
</feature>
<feature type="binding site" evidence="1">
    <location>
        <begin position="81"/>
        <end position="82"/>
    </location>
    <ligand>
        <name>FMN</name>
        <dbReference type="ChEBI" id="CHEBI:58210"/>
    </ligand>
</feature>
<feature type="binding site" evidence="1">
    <location>
        <position position="87"/>
    </location>
    <ligand>
        <name>FMN</name>
        <dbReference type="ChEBI" id="CHEBI:58210"/>
    </ligand>
</feature>
<feature type="binding site" evidence="1">
    <location>
        <position position="88"/>
    </location>
    <ligand>
        <name>FMN</name>
        <dbReference type="ChEBI" id="CHEBI:58210"/>
    </ligand>
</feature>
<feature type="binding site" evidence="1">
    <location>
        <position position="110"/>
    </location>
    <ligand>
        <name>FMN</name>
        <dbReference type="ChEBI" id="CHEBI:58210"/>
    </ligand>
</feature>
<feature type="binding site" evidence="1">
    <location>
        <position position="128"/>
    </location>
    <ligand>
        <name>substrate</name>
    </ligand>
</feature>
<feature type="binding site" evidence="1">
    <location>
        <position position="132"/>
    </location>
    <ligand>
        <name>substrate</name>
    </ligand>
</feature>
<feature type="binding site" evidence="1">
    <location>
        <position position="136"/>
    </location>
    <ligand>
        <name>substrate</name>
    </ligand>
</feature>
<feature type="binding site" evidence="1">
    <location>
        <begin position="145"/>
        <end position="146"/>
    </location>
    <ligand>
        <name>FMN</name>
        <dbReference type="ChEBI" id="CHEBI:58210"/>
    </ligand>
</feature>
<feature type="binding site" evidence="1">
    <location>
        <position position="190"/>
    </location>
    <ligand>
        <name>FMN</name>
        <dbReference type="ChEBI" id="CHEBI:58210"/>
    </ligand>
</feature>
<feature type="binding site" evidence="1">
    <location>
        <begin position="196"/>
        <end position="198"/>
    </location>
    <ligand>
        <name>substrate</name>
    </ligand>
</feature>
<feature type="binding site" evidence="1">
    <location>
        <position position="200"/>
    </location>
    <ligand>
        <name>FMN</name>
        <dbReference type="ChEBI" id="CHEBI:58210"/>
    </ligand>
</feature>
<protein>
    <recommendedName>
        <fullName evidence="1">Pyridoxine/pyridoxamine 5'-phosphate oxidase</fullName>
        <ecNumber evidence="1">1.4.3.5</ecNumber>
    </recommendedName>
    <alternativeName>
        <fullName evidence="1">PNP/PMP oxidase</fullName>
        <shortName evidence="1">PNPOx</shortName>
    </alternativeName>
    <alternativeName>
        <fullName evidence="1">Pyridoxal 5'-phosphate synthase</fullName>
    </alternativeName>
</protein>
<proteinExistence type="inferred from homology"/>
<reference key="1">
    <citation type="journal article" date="2006" name="PLoS Genet.">
        <title>The complete genome sequence and comparative genome analysis of the high pathogenicity Yersinia enterocolitica strain 8081.</title>
        <authorList>
            <person name="Thomson N.R."/>
            <person name="Howard S."/>
            <person name="Wren B.W."/>
            <person name="Holden M.T.G."/>
            <person name="Crossman L."/>
            <person name="Challis G.L."/>
            <person name="Churcher C."/>
            <person name="Mungall K."/>
            <person name="Brooks K."/>
            <person name="Chillingworth T."/>
            <person name="Feltwell T."/>
            <person name="Abdellah Z."/>
            <person name="Hauser H."/>
            <person name="Jagels K."/>
            <person name="Maddison M."/>
            <person name="Moule S."/>
            <person name="Sanders M."/>
            <person name="Whitehead S."/>
            <person name="Quail M.A."/>
            <person name="Dougan G."/>
            <person name="Parkhill J."/>
            <person name="Prentice M.B."/>
        </authorList>
    </citation>
    <scope>NUCLEOTIDE SEQUENCE [LARGE SCALE GENOMIC DNA]</scope>
    <source>
        <strain>NCTC 13174 / 8081</strain>
    </source>
</reference>